<name>GLCM1_MOUSE</name>
<accession>Q02596</accession>
<accession>A6H6D0</accession>
<dbReference type="EMBL" id="L08101">
    <property type="protein sequence ID" value="AAA79887.1"/>
    <property type="molecule type" value="Genomic_DNA"/>
</dbReference>
<dbReference type="EMBL" id="M93428">
    <property type="protein sequence ID" value="AAA37710.1"/>
    <property type="molecule type" value="mRNA"/>
</dbReference>
<dbReference type="EMBL" id="D16108">
    <property type="protein sequence ID" value="BAA03682.1"/>
    <property type="molecule type" value="Genomic_DNA"/>
</dbReference>
<dbReference type="EMBL" id="AK021358">
    <property type="protein sequence ID" value="BAB32385.1"/>
    <property type="molecule type" value="mRNA"/>
</dbReference>
<dbReference type="EMBL" id="BC145832">
    <property type="protein sequence ID" value="AAI45833.1"/>
    <property type="molecule type" value="mRNA"/>
</dbReference>
<dbReference type="EMBL" id="BC145858">
    <property type="protein sequence ID" value="AAI45859.1"/>
    <property type="molecule type" value="mRNA"/>
</dbReference>
<dbReference type="CCDS" id="CCDS27905.1"/>
<dbReference type="PIR" id="A41908">
    <property type="entry name" value="A41908"/>
</dbReference>
<dbReference type="RefSeq" id="NP_032160.1">
    <property type="nucleotide sequence ID" value="NM_008134.3"/>
</dbReference>
<dbReference type="SMR" id="Q02596"/>
<dbReference type="FunCoup" id="Q02596">
    <property type="interactions" value="174"/>
</dbReference>
<dbReference type="STRING" id="10090.ENSMUSP00000023134"/>
<dbReference type="GlyCosmos" id="Q02596">
    <property type="glycosylation" value="1 site, No reported glycans"/>
</dbReference>
<dbReference type="GlyGen" id="Q02596">
    <property type="glycosylation" value="1 site"/>
</dbReference>
<dbReference type="PhosphoSitePlus" id="Q02596"/>
<dbReference type="CPTAC" id="non-CPTAC-3711"/>
<dbReference type="PaxDb" id="10090-ENSMUSP00000023134"/>
<dbReference type="ProteomicsDB" id="271228"/>
<dbReference type="DNASU" id="14663"/>
<dbReference type="Ensembl" id="ENSMUST00000023134.5">
    <property type="protein sequence ID" value="ENSMUSP00000023134.4"/>
    <property type="gene ID" value="ENSMUSG00000022491.6"/>
</dbReference>
<dbReference type="GeneID" id="14663"/>
<dbReference type="KEGG" id="mmu:14663"/>
<dbReference type="UCSC" id="uc007xyk.2">
    <property type="organism name" value="mouse"/>
</dbReference>
<dbReference type="AGR" id="MGI:95759"/>
<dbReference type="CTD" id="644076"/>
<dbReference type="MGI" id="MGI:95759">
    <property type="gene designation" value="Glycam1"/>
</dbReference>
<dbReference type="VEuPathDB" id="HostDB:ENSMUSG00000022491"/>
<dbReference type="eggNOG" id="ENOG502TDVV">
    <property type="taxonomic scope" value="Eukaryota"/>
</dbReference>
<dbReference type="GeneTree" id="ENSGT00520000060242"/>
<dbReference type="HOGENOM" id="CLU_137449_0_0_1"/>
<dbReference type="InParanoid" id="Q02596"/>
<dbReference type="OMA" id="SEEETHW"/>
<dbReference type="OrthoDB" id="9796712at2759"/>
<dbReference type="PhylomeDB" id="Q02596"/>
<dbReference type="TreeFam" id="TF339780"/>
<dbReference type="BioGRID-ORCS" id="14663">
    <property type="hits" value="3 hits in 76 CRISPR screens"/>
</dbReference>
<dbReference type="ChiTaRS" id="Glycam1">
    <property type="organism name" value="mouse"/>
</dbReference>
<dbReference type="PRO" id="PR:Q02596"/>
<dbReference type="Proteomes" id="UP000000589">
    <property type="component" value="Chromosome 15"/>
</dbReference>
<dbReference type="RNAct" id="Q02596">
    <property type="molecule type" value="protein"/>
</dbReference>
<dbReference type="Bgee" id="ENSMUSG00000022491">
    <property type="expression patterns" value="Expressed in peripheral lymph node and 62 other cell types or tissues"/>
</dbReference>
<dbReference type="ExpressionAtlas" id="Q02596">
    <property type="expression patterns" value="baseline and differential"/>
</dbReference>
<dbReference type="GO" id="GO:0005576">
    <property type="term" value="C:extracellular region"/>
    <property type="evidence" value="ECO:0000314"/>
    <property type="project" value="MGI"/>
</dbReference>
<dbReference type="GO" id="GO:0005886">
    <property type="term" value="C:plasma membrane"/>
    <property type="evidence" value="ECO:0007669"/>
    <property type="project" value="UniProtKB-SubCell"/>
</dbReference>
<dbReference type="GO" id="GO:0050839">
    <property type="term" value="F:cell adhesion molecule binding"/>
    <property type="evidence" value="ECO:0000353"/>
    <property type="project" value="MGI"/>
</dbReference>
<dbReference type="GO" id="GO:0043199">
    <property type="term" value="F:sulfate binding"/>
    <property type="evidence" value="ECO:0000314"/>
    <property type="project" value="MGI"/>
</dbReference>
<dbReference type="GO" id="GO:0007155">
    <property type="term" value="P:cell adhesion"/>
    <property type="evidence" value="ECO:0007669"/>
    <property type="project" value="UniProtKB-KW"/>
</dbReference>
<dbReference type="GO" id="GO:0009617">
    <property type="term" value="P:response to bacterium"/>
    <property type="evidence" value="ECO:0000270"/>
    <property type="project" value="MGI"/>
</dbReference>
<dbReference type="InterPro" id="IPR007906">
    <property type="entry name" value="GLYCAM-1"/>
</dbReference>
<dbReference type="Pfam" id="PF05242">
    <property type="entry name" value="GLYCAM-1"/>
    <property type="match status" value="1"/>
</dbReference>
<keyword id="KW-0130">Cell adhesion</keyword>
<keyword id="KW-1003">Cell membrane</keyword>
<keyword id="KW-0903">Direct protein sequencing</keyword>
<keyword id="KW-0325">Glycoprotein</keyword>
<keyword id="KW-0472">Membrane</keyword>
<keyword id="KW-0597">Phosphoprotein</keyword>
<keyword id="KW-1185">Reference proteome</keyword>
<keyword id="KW-0732">Signal</keyword>
<evidence type="ECO:0000250" key="1">
    <source>
        <dbReference type="UniProtKB" id="P80195"/>
    </source>
</evidence>
<evidence type="ECO:0000255" key="2"/>
<evidence type="ECO:0000256" key="3">
    <source>
        <dbReference type="SAM" id="MobiDB-lite"/>
    </source>
</evidence>
<evidence type="ECO:0000269" key="4">
    <source>
    </source>
</evidence>
<evidence type="ECO:0000305" key="5"/>
<comment type="function">
    <text>Adhesion molecule that accomplishes cell binding by presenting carbohydrate(s) to the lectin domain of L-selectin.</text>
</comment>
<comment type="subcellular location">
    <subcellularLocation>
        <location>Cell membrane</location>
    </subcellularLocation>
</comment>
<comment type="tissue specificity">
    <text>Lymph nodes. Associated with the lumenal surface of the high endothelial venules of peripheral lymph nodes.</text>
</comment>
<comment type="PTM">
    <text>Extensively O-glycosylated.</text>
</comment>
<comment type="similarity">
    <text evidence="5">Belongs to the PP3/GlyCAM-1 family.</text>
</comment>
<organism>
    <name type="scientific">Mus musculus</name>
    <name type="common">Mouse</name>
    <dbReference type="NCBI Taxonomy" id="10090"/>
    <lineage>
        <taxon>Eukaryota</taxon>
        <taxon>Metazoa</taxon>
        <taxon>Chordata</taxon>
        <taxon>Craniata</taxon>
        <taxon>Vertebrata</taxon>
        <taxon>Euteleostomi</taxon>
        <taxon>Mammalia</taxon>
        <taxon>Eutheria</taxon>
        <taxon>Euarchontoglires</taxon>
        <taxon>Glires</taxon>
        <taxon>Rodentia</taxon>
        <taxon>Myomorpha</taxon>
        <taxon>Muroidea</taxon>
        <taxon>Muridae</taxon>
        <taxon>Murinae</taxon>
        <taxon>Mus</taxon>
        <taxon>Mus</taxon>
    </lineage>
</organism>
<reference key="1">
    <citation type="journal article" date="1992" name="Cell">
        <title>An endothelial ligand for L-selectin is a novel mucin-like molecule.</title>
        <authorList>
            <person name="Lasky L.A."/>
            <person name="Singer M.S."/>
            <person name="Dowbenko D."/>
            <person name="Imai Y."/>
            <person name="Henzel W.J."/>
            <person name="Grimley C."/>
            <person name="Fennie C."/>
            <person name="Gillett N."/>
            <person name="Watson S.R."/>
            <person name="Rosen S.D."/>
        </authorList>
    </citation>
    <scope>NUCLEOTIDE SEQUENCE [GENOMIC DNA / MRNA]</scope>
    <scope>PROTEIN SEQUENCE OF 20-41</scope>
    <source>
        <tissue>Lymph node</tissue>
    </source>
</reference>
<reference key="2">
    <citation type="journal article" date="1993" name="J. Biol. Chem.">
        <title>Structure and chromosomal localization of the murine gene encoding GLYCAM 1. A mucin-like endothelial ligand for L selectin.</title>
        <authorList>
            <person name="Dowbenko D."/>
            <person name="Andalibi A."/>
            <person name="Young P.E."/>
            <person name="Lusis A.J."/>
            <person name="Lasky L.A."/>
        </authorList>
    </citation>
    <scope>NUCLEOTIDE SEQUENCE [GENOMIC DNA]</scope>
    <source>
        <tissue>Liver</tissue>
    </source>
</reference>
<reference key="3">
    <citation type="journal article" date="1993" name="J. Biochem.">
        <title>Expression of the mC26 gene encoding GlyCAM-1 in the lactating mouse mammary gland.</title>
        <authorList>
            <person name="Nishimura T."/>
            <person name="Takeshita N."/>
            <person name="Satow H."/>
            <person name="Kohmoto K."/>
        </authorList>
    </citation>
    <scope>NUCLEOTIDE SEQUENCE [GENOMIC DNA]</scope>
    <source>
        <strain>BALB/cJ</strain>
        <tissue>Liver</tissue>
    </source>
</reference>
<reference key="4">
    <citation type="journal article" date="2005" name="Science">
        <title>The transcriptional landscape of the mammalian genome.</title>
        <authorList>
            <person name="Carninci P."/>
            <person name="Kasukawa T."/>
            <person name="Katayama S."/>
            <person name="Gough J."/>
            <person name="Frith M.C."/>
            <person name="Maeda N."/>
            <person name="Oyama R."/>
            <person name="Ravasi T."/>
            <person name="Lenhard B."/>
            <person name="Wells C."/>
            <person name="Kodzius R."/>
            <person name="Shimokawa K."/>
            <person name="Bajic V.B."/>
            <person name="Brenner S.E."/>
            <person name="Batalov S."/>
            <person name="Forrest A.R."/>
            <person name="Zavolan M."/>
            <person name="Davis M.J."/>
            <person name="Wilming L.G."/>
            <person name="Aidinis V."/>
            <person name="Allen J.E."/>
            <person name="Ambesi-Impiombato A."/>
            <person name="Apweiler R."/>
            <person name="Aturaliya R.N."/>
            <person name="Bailey T.L."/>
            <person name="Bansal M."/>
            <person name="Baxter L."/>
            <person name="Beisel K.W."/>
            <person name="Bersano T."/>
            <person name="Bono H."/>
            <person name="Chalk A.M."/>
            <person name="Chiu K.P."/>
            <person name="Choudhary V."/>
            <person name="Christoffels A."/>
            <person name="Clutterbuck D.R."/>
            <person name="Crowe M.L."/>
            <person name="Dalla E."/>
            <person name="Dalrymple B.P."/>
            <person name="de Bono B."/>
            <person name="Della Gatta G."/>
            <person name="di Bernardo D."/>
            <person name="Down T."/>
            <person name="Engstrom P."/>
            <person name="Fagiolini M."/>
            <person name="Faulkner G."/>
            <person name="Fletcher C.F."/>
            <person name="Fukushima T."/>
            <person name="Furuno M."/>
            <person name="Futaki S."/>
            <person name="Gariboldi M."/>
            <person name="Georgii-Hemming P."/>
            <person name="Gingeras T.R."/>
            <person name="Gojobori T."/>
            <person name="Green R.E."/>
            <person name="Gustincich S."/>
            <person name="Harbers M."/>
            <person name="Hayashi Y."/>
            <person name="Hensch T.K."/>
            <person name="Hirokawa N."/>
            <person name="Hill D."/>
            <person name="Huminiecki L."/>
            <person name="Iacono M."/>
            <person name="Ikeo K."/>
            <person name="Iwama A."/>
            <person name="Ishikawa T."/>
            <person name="Jakt M."/>
            <person name="Kanapin A."/>
            <person name="Katoh M."/>
            <person name="Kawasawa Y."/>
            <person name="Kelso J."/>
            <person name="Kitamura H."/>
            <person name="Kitano H."/>
            <person name="Kollias G."/>
            <person name="Krishnan S.P."/>
            <person name="Kruger A."/>
            <person name="Kummerfeld S.K."/>
            <person name="Kurochkin I.V."/>
            <person name="Lareau L.F."/>
            <person name="Lazarevic D."/>
            <person name="Lipovich L."/>
            <person name="Liu J."/>
            <person name="Liuni S."/>
            <person name="McWilliam S."/>
            <person name="Madan Babu M."/>
            <person name="Madera M."/>
            <person name="Marchionni L."/>
            <person name="Matsuda H."/>
            <person name="Matsuzawa S."/>
            <person name="Miki H."/>
            <person name="Mignone F."/>
            <person name="Miyake S."/>
            <person name="Morris K."/>
            <person name="Mottagui-Tabar S."/>
            <person name="Mulder N."/>
            <person name="Nakano N."/>
            <person name="Nakauchi H."/>
            <person name="Ng P."/>
            <person name="Nilsson R."/>
            <person name="Nishiguchi S."/>
            <person name="Nishikawa S."/>
            <person name="Nori F."/>
            <person name="Ohara O."/>
            <person name="Okazaki Y."/>
            <person name="Orlando V."/>
            <person name="Pang K.C."/>
            <person name="Pavan W.J."/>
            <person name="Pavesi G."/>
            <person name="Pesole G."/>
            <person name="Petrovsky N."/>
            <person name="Piazza S."/>
            <person name="Reed J."/>
            <person name="Reid J.F."/>
            <person name="Ring B.Z."/>
            <person name="Ringwald M."/>
            <person name="Rost B."/>
            <person name="Ruan Y."/>
            <person name="Salzberg S.L."/>
            <person name="Sandelin A."/>
            <person name="Schneider C."/>
            <person name="Schoenbach C."/>
            <person name="Sekiguchi K."/>
            <person name="Semple C.A."/>
            <person name="Seno S."/>
            <person name="Sessa L."/>
            <person name="Sheng Y."/>
            <person name="Shibata Y."/>
            <person name="Shimada H."/>
            <person name="Shimada K."/>
            <person name="Silva D."/>
            <person name="Sinclair B."/>
            <person name="Sperling S."/>
            <person name="Stupka E."/>
            <person name="Sugiura K."/>
            <person name="Sultana R."/>
            <person name="Takenaka Y."/>
            <person name="Taki K."/>
            <person name="Tammoja K."/>
            <person name="Tan S.L."/>
            <person name="Tang S."/>
            <person name="Taylor M.S."/>
            <person name="Tegner J."/>
            <person name="Teichmann S.A."/>
            <person name="Ueda H.R."/>
            <person name="van Nimwegen E."/>
            <person name="Verardo R."/>
            <person name="Wei C.L."/>
            <person name="Yagi K."/>
            <person name="Yamanishi H."/>
            <person name="Zabarovsky E."/>
            <person name="Zhu S."/>
            <person name="Zimmer A."/>
            <person name="Hide W."/>
            <person name="Bult C."/>
            <person name="Grimmond S.M."/>
            <person name="Teasdale R.D."/>
            <person name="Liu E.T."/>
            <person name="Brusic V."/>
            <person name="Quackenbush J."/>
            <person name="Wahlestedt C."/>
            <person name="Mattick J.S."/>
            <person name="Hume D.A."/>
            <person name="Kai C."/>
            <person name="Sasaki D."/>
            <person name="Tomaru Y."/>
            <person name="Fukuda S."/>
            <person name="Kanamori-Katayama M."/>
            <person name="Suzuki M."/>
            <person name="Aoki J."/>
            <person name="Arakawa T."/>
            <person name="Iida J."/>
            <person name="Imamura K."/>
            <person name="Itoh M."/>
            <person name="Kato T."/>
            <person name="Kawaji H."/>
            <person name="Kawagashira N."/>
            <person name="Kawashima T."/>
            <person name="Kojima M."/>
            <person name="Kondo S."/>
            <person name="Konno H."/>
            <person name="Nakano K."/>
            <person name="Ninomiya N."/>
            <person name="Nishio T."/>
            <person name="Okada M."/>
            <person name="Plessy C."/>
            <person name="Shibata K."/>
            <person name="Shiraki T."/>
            <person name="Suzuki S."/>
            <person name="Tagami M."/>
            <person name="Waki K."/>
            <person name="Watahiki A."/>
            <person name="Okamura-Oho Y."/>
            <person name="Suzuki H."/>
            <person name="Kawai J."/>
            <person name="Hayashizaki Y."/>
        </authorList>
    </citation>
    <scope>NUCLEOTIDE SEQUENCE [LARGE SCALE MRNA]</scope>
    <source>
        <strain>C57BL/6J</strain>
        <tissue>Mammary gland</tissue>
    </source>
</reference>
<reference key="5">
    <citation type="journal article" date="2004" name="Genome Res.">
        <title>The status, quality, and expansion of the NIH full-length cDNA project: the Mammalian Gene Collection (MGC).</title>
        <authorList>
            <consortium name="The MGC Project Team"/>
        </authorList>
    </citation>
    <scope>NUCLEOTIDE SEQUENCE [LARGE SCALE MRNA]</scope>
    <source>
        <tissue>Brain</tissue>
    </source>
</reference>
<reference key="6">
    <citation type="journal article" date="1995" name="J. Biol. Chem.">
        <title>Structure of the O-glycans in GlyCAM-1, an endothelial-derived ligand for L-selectin.</title>
        <authorList>
            <person name="Hemmerich S."/>
            <person name="Leffler H."/>
            <person name="Rosen S.D."/>
        </authorList>
    </citation>
    <scope>STRUCTURE OF CARBOHYDRATES</scope>
</reference>
<protein>
    <recommendedName>
        <fullName>Glycosylation-dependent cell adhesion molecule 1</fullName>
        <shortName>GlyCAM-1</shortName>
    </recommendedName>
    <alternativeName>
        <fullName>Endothelial ligand FOR L-selectin</fullName>
    </alternativeName>
    <alternativeName>
        <fullName>MC26</fullName>
    </alternativeName>
    <alternativeName>
        <fullName>SGP50</fullName>
    </alternativeName>
    <alternativeName>
        <fullName>Sulfated 50 kDa glycoprotein</fullName>
    </alternativeName>
</protein>
<feature type="signal peptide" evidence="4">
    <location>
        <begin position="1"/>
        <end position="19"/>
    </location>
</feature>
<feature type="chain" id="PRO_0000025406" description="Glycosylation-dependent cell adhesion molecule 1">
    <location>
        <begin position="20"/>
        <end position="151"/>
    </location>
</feature>
<feature type="region of interest" description="Disordered" evidence="3">
    <location>
        <begin position="29"/>
        <end position="123"/>
    </location>
</feature>
<feature type="compositionally biased region" description="Low complexity" evidence="3">
    <location>
        <begin position="42"/>
        <end position="52"/>
    </location>
</feature>
<feature type="compositionally biased region" description="Basic and acidic residues" evidence="3">
    <location>
        <begin position="53"/>
        <end position="71"/>
    </location>
</feature>
<feature type="compositionally biased region" description="Low complexity" evidence="3">
    <location>
        <begin position="103"/>
        <end position="114"/>
    </location>
</feature>
<feature type="modified residue" description="Phosphoserine" evidence="1">
    <location>
        <position position="54"/>
    </location>
</feature>
<feature type="modified residue" description="Phosphoserine" evidence="1">
    <location>
        <position position="59"/>
    </location>
</feature>
<feature type="modified residue" description="Phosphoserine" evidence="1">
    <location>
        <position position="63"/>
    </location>
</feature>
<feature type="modified residue" description="Phosphoserine" evidence="1">
    <location>
        <position position="71"/>
    </location>
</feature>
<feature type="glycosylation site" description="N-linked (GlcNAc...) asparagine" evidence="2">
    <location>
        <position position="115"/>
    </location>
</feature>
<proteinExistence type="evidence at protein level"/>
<sequence>MKFFTVLLFVSLAATSLALLPGSKDELQMKTQPTDAIPAAQSTPTSYTSEESTSSKDLSKEPSIFREELISKDNVVIESTKPENQEAQDGLRSGSSQLEETTRPTTSAATTSEENLTKSSQTVEEELGKIIEGFVTGAEDIISGASRITKS</sequence>
<gene>
    <name type="primary">Glycam1</name>
</gene>